<keyword id="KW-0963">Cytoplasm</keyword>
<keyword id="KW-0378">Hydrolase</keyword>
<keyword id="KW-0694">RNA-binding</keyword>
<keyword id="KW-0820">tRNA-binding</keyword>
<proteinExistence type="inferred from homology"/>
<evidence type="ECO:0000255" key="1">
    <source>
        <dbReference type="HAMAP-Rule" id="MF_00083"/>
    </source>
</evidence>
<comment type="function">
    <text evidence="1">Hydrolyzes ribosome-free peptidyl-tRNAs (with 1 or more amino acids incorporated), which drop off the ribosome during protein synthesis, or as a result of ribosome stalling.</text>
</comment>
<comment type="function">
    <text evidence="1">Catalyzes the release of premature peptidyl moieties from peptidyl-tRNA molecules trapped in stalled 50S ribosomal subunits, and thus maintains levels of free tRNAs and 50S ribosomes.</text>
</comment>
<comment type="catalytic activity">
    <reaction evidence="1">
        <text>an N-acyl-L-alpha-aminoacyl-tRNA + H2O = an N-acyl-L-amino acid + a tRNA + H(+)</text>
        <dbReference type="Rhea" id="RHEA:54448"/>
        <dbReference type="Rhea" id="RHEA-COMP:10123"/>
        <dbReference type="Rhea" id="RHEA-COMP:13883"/>
        <dbReference type="ChEBI" id="CHEBI:15377"/>
        <dbReference type="ChEBI" id="CHEBI:15378"/>
        <dbReference type="ChEBI" id="CHEBI:59874"/>
        <dbReference type="ChEBI" id="CHEBI:78442"/>
        <dbReference type="ChEBI" id="CHEBI:138191"/>
        <dbReference type="EC" id="3.1.1.29"/>
    </reaction>
</comment>
<comment type="subunit">
    <text evidence="1">Monomer.</text>
</comment>
<comment type="subcellular location">
    <subcellularLocation>
        <location evidence="1">Cytoplasm</location>
    </subcellularLocation>
</comment>
<comment type="similarity">
    <text evidence="1">Belongs to the PTH family.</text>
</comment>
<feature type="chain" id="PRO_1000118410" description="Peptidyl-tRNA hydrolase">
    <location>
        <begin position="1"/>
        <end position="189"/>
    </location>
</feature>
<feature type="active site" description="Proton acceptor" evidence="1">
    <location>
        <position position="20"/>
    </location>
</feature>
<feature type="binding site" evidence="1">
    <location>
        <position position="15"/>
    </location>
    <ligand>
        <name>tRNA</name>
        <dbReference type="ChEBI" id="CHEBI:17843"/>
    </ligand>
</feature>
<feature type="binding site" evidence="1">
    <location>
        <position position="66"/>
    </location>
    <ligand>
        <name>tRNA</name>
        <dbReference type="ChEBI" id="CHEBI:17843"/>
    </ligand>
</feature>
<feature type="binding site" evidence="1">
    <location>
        <position position="68"/>
    </location>
    <ligand>
        <name>tRNA</name>
        <dbReference type="ChEBI" id="CHEBI:17843"/>
    </ligand>
</feature>
<feature type="binding site" evidence="1">
    <location>
        <position position="114"/>
    </location>
    <ligand>
        <name>tRNA</name>
        <dbReference type="ChEBI" id="CHEBI:17843"/>
    </ligand>
</feature>
<feature type="site" description="Discriminates between blocked and unblocked aminoacyl-tRNA" evidence="1">
    <location>
        <position position="10"/>
    </location>
</feature>
<feature type="site" description="Stabilizes the basic form of H active site to accept a proton" evidence="1">
    <location>
        <position position="93"/>
    </location>
</feature>
<sequence>MTKLLVGLGNPGDKYFETKHNVGFMLIDQLAKKQNVTFTHDKIFQADLASFFLNGEKIYLVKPTTFMNESGKAVHALLTYYGLDIDDLLIIYDDLDMEVGKIRLRAKGSAGGHNGIKSIIQHIGTQVFNRVKIGIGRPKNGMSVVHHVLSKFDRDDYIGILQSVDKVDDSVNYYLQEKNFEKTMQRYNG</sequence>
<gene>
    <name evidence="1" type="primary">pth</name>
    <name type="ordered locus">SP70585_0005</name>
</gene>
<accession>C1C986</accession>
<name>PTH_STRP7</name>
<dbReference type="EC" id="3.1.1.29" evidence="1"/>
<dbReference type="EMBL" id="CP000918">
    <property type="protein sequence ID" value="ACO17177.1"/>
    <property type="molecule type" value="Genomic_DNA"/>
</dbReference>
<dbReference type="RefSeq" id="WP_000163932.1">
    <property type="nucleotide sequence ID" value="NC_012468.1"/>
</dbReference>
<dbReference type="SMR" id="C1C986"/>
<dbReference type="GeneID" id="45652531"/>
<dbReference type="KEGG" id="snm:SP70585_0005"/>
<dbReference type="HOGENOM" id="CLU_062456_4_1_9"/>
<dbReference type="Proteomes" id="UP000002211">
    <property type="component" value="Chromosome"/>
</dbReference>
<dbReference type="GO" id="GO:0005737">
    <property type="term" value="C:cytoplasm"/>
    <property type="evidence" value="ECO:0007669"/>
    <property type="project" value="UniProtKB-SubCell"/>
</dbReference>
<dbReference type="GO" id="GO:0004045">
    <property type="term" value="F:peptidyl-tRNA hydrolase activity"/>
    <property type="evidence" value="ECO:0007669"/>
    <property type="project" value="UniProtKB-UniRule"/>
</dbReference>
<dbReference type="GO" id="GO:0000049">
    <property type="term" value="F:tRNA binding"/>
    <property type="evidence" value="ECO:0007669"/>
    <property type="project" value="UniProtKB-UniRule"/>
</dbReference>
<dbReference type="GO" id="GO:0006515">
    <property type="term" value="P:protein quality control for misfolded or incompletely synthesized proteins"/>
    <property type="evidence" value="ECO:0007669"/>
    <property type="project" value="UniProtKB-UniRule"/>
</dbReference>
<dbReference type="GO" id="GO:0072344">
    <property type="term" value="P:rescue of stalled ribosome"/>
    <property type="evidence" value="ECO:0007669"/>
    <property type="project" value="UniProtKB-UniRule"/>
</dbReference>
<dbReference type="CDD" id="cd00462">
    <property type="entry name" value="PTH"/>
    <property type="match status" value="1"/>
</dbReference>
<dbReference type="FunFam" id="3.40.50.1470:FF:000001">
    <property type="entry name" value="Peptidyl-tRNA hydrolase"/>
    <property type="match status" value="1"/>
</dbReference>
<dbReference type="Gene3D" id="3.40.50.1470">
    <property type="entry name" value="Peptidyl-tRNA hydrolase"/>
    <property type="match status" value="1"/>
</dbReference>
<dbReference type="HAMAP" id="MF_00083">
    <property type="entry name" value="Pept_tRNA_hydro_bact"/>
    <property type="match status" value="1"/>
</dbReference>
<dbReference type="InterPro" id="IPR001328">
    <property type="entry name" value="Pept_tRNA_hydro"/>
</dbReference>
<dbReference type="InterPro" id="IPR018171">
    <property type="entry name" value="Pept_tRNA_hydro_CS"/>
</dbReference>
<dbReference type="InterPro" id="IPR036416">
    <property type="entry name" value="Pept_tRNA_hydro_sf"/>
</dbReference>
<dbReference type="NCBIfam" id="TIGR00447">
    <property type="entry name" value="pth"/>
    <property type="match status" value="1"/>
</dbReference>
<dbReference type="PANTHER" id="PTHR17224">
    <property type="entry name" value="PEPTIDYL-TRNA HYDROLASE"/>
    <property type="match status" value="1"/>
</dbReference>
<dbReference type="PANTHER" id="PTHR17224:SF1">
    <property type="entry name" value="PEPTIDYL-TRNA HYDROLASE"/>
    <property type="match status" value="1"/>
</dbReference>
<dbReference type="Pfam" id="PF01195">
    <property type="entry name" value="Pept_tRNA_hydro"/>
    <property type="match status" value="1"/>
</dbReference>
<dbReference type="SUPFAM" id="SSF53178">
    <property type="entry name" value="Peptidyl-tRNA hydrolase-like"/>
    <property type="match status" value="1"/>
</dbReference>
<dbReference type="PROSITE" id="PS01195">
    <property type="entry name" value="PEPT_TRNA_HYDROL_1"/>
    <property type="match status" value="1"/>
</dbReference>
<dbReference type="PROSITE" id="PS01196">
    <property type="entry name" value="PEPT_TRNA_HYDROL_2"/>
    <property type="match status" value="1"/>
</dbReference>
<protein>
    <recommendedName>
        <fullName evidence="1">Peptidyl-tRNA hydrolase</fullName>
        <shortName evidence="1">Pth</shortName>
        <ecNumber evidence="1">3.1.1.29</ecNumber>
    </recommendedName>
</protein>
<organism>
    <name type="scientific">Streptococcus pneumoniae (strain 70585)</name>
    <dbReference type="NCBI Taxonomy" id="488221"/>
    <lineage>
        <taxon>Bacteria</taxon>
        <taxon>Bacillati</taxon>
        <taxon>Bacillota</taxon>
        <taxon>Bacilli</taxon>
        <taxon>Lactobacillales</taxon>
        <taxon>Streptococcaceae</taxon>
        <taxon>Streptococcus</taxon>
    </lineage>
</organism>
<reference key="1">
    <citation type="journal article" date="2010" name="Genome Biol.">
        <title>Structure and dynamics of the pan-genome of Streptococcus pneumoniae and closely related species.</title>
        <authorList>
            <person name="Donati C."/>
            <person name="Hiller N.L."/>
            <person name="Tettelin H."/>
            <person name="Muzzi A."/>
            <person name="Croucher N.J."/>
            <person name="Angiuoli S.V."/>
            <person name="Oggioni M."/>
            <person name="Dunning Hotopp J.C."/>
            <person name="Hu F.Z."/>
            <person name="Riley D.R."/>
            <person name="Covacci A."/>
            <person name="Mitchell T.J."/>
            <person name="Bentley S.D."/>
            <person name="Kilian M."/>
            <person name="Ehrlich G.D."/>
            <person name="Rappuoli R."/>
            <person name="Moxon E.R."/>
            <person name="Masignani V."/>
        </authorList>
    </citation>
    <scope>NUCLEOTIDE SEQUENCE [LARGE SCALE GENOMIC DNA]</scope>
    <source>
        <strain>70585</strain>
    </source>
</reference>